<keyword id="KW-0067">ATP-binding</keyword>
<keyword id="KW-0436">Ligase</keyword>
<keyword id="KW-0460">Magnesium</keyword>
<keyword id="KW-0479">Metal-binding</keyword>
<keyword id="KW-0547">Nucleotide-binding</keyword>
<keyword id="KW-0816">Tricarboxylic acid cycle</keyword>
<proteinExistence type="inferred from homology"/>
<reference key="1">
    <citation type="journal article" date="2005" name="Nat. Biotechnol.">
        <title>Complete genome sequence of the plant commensal Pseudomonas fluorescens Pf-5.</title>
        <authorList>
            <person name="Paulsen I.T."/>
            <person name="Press C.M."/>
            <person name="Ravel J."/>
            <person name="Kobayashi D.Y."/>
            <person name="Myers G.S.A."/>
            <person name="Mavrodi D.V."/>
            <person name="DeBoy R.T."/>
            <person name="Seshadri R."/>
            <person name="Ren Q."/>
            <person name="Madupu R."/>
            <person name="Dodson R.J."/>
            <person name="Durkin A.S."/>
            <person name="Brinkac L.M."/>
            <person name="Daugherty S.C."/>
            <person name="Sullivan S.A."/>
            <person name="Rosovitz M.J."/>
            <person name="Gwinn M.L."/>
            <person name="Zhou L."/>
            <person name="Schneider D.J."/>
            <person name="Cartinhour S.W."/>
            <person name="Nelson W.C."/>
            <person name="Weidman J."/>
            <person name="Watkins K."/>
            <person name="Tran K."/>
            <person name="Khouri H."/>
            <person name="Pierson E.A."/>
            <person name="Pierson L.S. III"/>
            <person name="Thomashow L.S."/>
            <person name="Loper J.E."/>
        </authorList>
    </citation>
    <scope>NUCLEOTIDE SEQUENCE [LARGE SCALE GENOMIC DNA]</scope>
    <source>
        <strain>ATCC BAA-477 / NRRL B-23932 / Pf-5</strain>
    </source>
</reference>
<organism>
    <name type="scientific">Pseudomonas fluorescens (strain ATCC BAA-477 / NRRL B-23932 / Pf-5)</name>
    <dbReference type="NCBI Taxonomy" id="220664"/>
    <lineage>
        <taxon>Bacteria</taxon>
        <taxon>Pseudomonadati</taxon>
        <taxon>Pseudomonadota</taxon>
        <taxon>Gammaproteobacteria</taxon>
        <taxon>Pseudomonadales</taxon>
        <taxon>Pseudomonadaceae</taxon>
        <taxon>Pseudomonas</taxon>
    </lineage>
</organism>
<accession>Q4KFY6</accession>
<name>SUCC_PSEF5</name>
<gene>
    <name evidence="1" type="primary">sucC</name>
    <name type="ordered locus">PFL_1721</name>
</gene>
<feature type="chain" id="PRO_1000082168" description="Succinate--CoA ligase [ADP-forming] subunit beta">
    <location>
        <begin position="1"/>
        <end position="388"/>
    </location>
</feature>
<feature type="domain" description="ATP-grasp" evidence="1">
    <location>
        <begin position="9"/>
        <end position="244"/>
    </location>
</feature>
<feature type="binding site" evidence="1">
    <location>
        <position position="46"/>
    </location>
    <ligand>
        <name>ATP</name>
        <dbReference type="ChEBI" id="CHEBI:30616"/>
    </ligand>
</feature>
<feature type="binding site" evidence="1">
    <location>
        <begin position="53"/>
        <end position="55"/>
    </location>
    <ligand>
        <name>ATP</name>
        <dbReference type="ChEBI" id="CHEBI:30616"/>
    </ligand>
</feature>
<feature type="binding site" evidence="1">
    <location>
        <position position="99"/>
    </location>
    <ligand>
        <name>ATP</name>
        <dbReference type="ChEBI" id="CHEBI:30616"/>
    </ligand>
</feature>
<feature type="binding site" evidence="1">
    <location>
        <position position="102"/>
    </location>
    <ligand>
        <name>ATP</name>
        <dbReference type="ChEBI" id="CHEBI:30616"/>
    </ligand>
</feature>
<feature type="binding site" evidence="1">
    <location>
        <position position="107"/>
    </location>
    <ligand>
        <name>ATP</name>
        <dbReference type="ChEBI" id="CHEBI:30616"/>
    </ligand>
</feature>
<feature type="binding site" evidence="1">
    <location>
        <position position="199"/>
    </location>
    <ligand>
        <name>Mg(2+)</name>
        <dbReference type="ChEBI" id="CHEBI:18420"/>
    </ligand>
</feature>
<feature type="binding site" evidence="1">
    <location>
        <position position="213"/>
    </location>
    <ligand>
        <name>Mg(2+)</name>
        <dbReference type="ChEBI" id="CHEBI:18420"/>
    </ligand>
</feature>
<feature type="binding site" evidence="1">
    <location>
        <position position="264"/>
    </location>
    <ligand>
        <name>substrate</name>
        <note>ligand shared with subunit alpha</note>
    </ligand>
</feature>
<feature type="binding site" evidence="1">
    <location>
        <begin position="321"/>
        <end position="323"/>
    </location>
    <ligand>
        <name>substrate</name>
        <note>ligand shared with subunit alpha</note>
    </ligand>
</feature>
<protein>
    <recommendedName>
        <fullName evidence="1">Succinate--CoA ligase [ADP-forming] subunit beta</fullName>
        <ecNumber evidence="1">6.2.1.5</ecNumber>
    </recommendedName>
    <alternativeName>
        <fullName evidence="1">Succinyl-CoA synthetase subunit beta</fullName>
        <shortName evidence="1">SCS-beta</shortName>
    </alternativeName>
</protein>
<comment type="function">
    <text evidence="1">Succinyl-CoA synthetase functions in the citric acid cycle (TCA), coupling the hydrolysis of succinyl-CoA to the synthesis of either ATP or GTP and thus represents the only step of substrate-level phosphorylation in the TCA. The beta subunit provides nucleotide specificity of the enzyme and binds the substrate succinate, while the binding sites for coenzyme A and phosphate are found in the alpha subunit.</text>
</comment>
<comment type="catalytic activity">
    <reaction evidence="1">
        <text>succinate + ATP + CoA = succinyl-CoA + ADP + phosphate</text>
        <dbReference type="Rhea" id="RHEA:17661"/>
        <dbReference type="ChEBI" id="CHEBI:30031"/>
        <dbReference type="ChEBI" id="CHEBI:30616"/>
        <dbReference type="ChEBI" id="CHEBI:43474"/>
        <dbReference type="ChEBI" id="CHEBI:57287"/>
        <dbReference type="ChEBI" id="CHEBI:57292"/>
        <dbReference type="ChEBI" id="CHEBI:456216"/>
        <dbReference type="EC" id="6.2.1.5"/>
    </reaction>
    <physiologicalReaction direction="right-to-left" evidence="1">
        <dbReference type="Rhea" id="RHEA:17663"/>
    </physiologicalReaction>
</comment>
<comment type="catalytic activity">
    <reaction evidence="1">
        <text>GTP + succinate + CoA = succinyl-CoA + GDP + phosphate</text>
        <dbReference type="Rhea" id="RHEA:22120"/>
        <dbReference type="ChEBI" id="CHEBI:30031"/>
        <dbReference type="ChEBI" id="CHEBI:37565"/>
        <dbReference type="ChEBI" id="CHEBI:43474"/>
        <dbReference type="ChEBI" id="CHEBI:57287"/>
        <dbReference type="ChEBI" id="CHEBI:57292"/>
        <dbReference type="ChEBI" id="CHEBI:58189"/>
    </reaction>
    <physiologicalReaction direction="right-to-left" evidence="1">
        <dbReference type="Rhea" id="RHEA:22122"/>
    </physiologicalReaction>
</comment>
<comment type="cofactor">
    <cofactor evidence="1">
        <name>Mg(2+)</name>
        <dbReference type="ChEBI" id="CHEBI:18420"/>
    </cofactor>
    <text evidence="1">Binds 1 Mg(2+) ion per subunit.</text>
</comment>
<comment type="pathway">
    <text evidence="1">Carbohydrate metabolism; tricarboxylic acid cycle; succinate from succinyl-CoA (ligase route): step 1/1.</text>
</comment>
<comment type="subunit">
    <text evidence="1">Heterotetramer of two alpha and two beta subunits.</text>
</comment>
<comment type="similarity">
    <text evidence="1">Belongs to the succinate/malate CoA ligase beta subunit family.</text>
</comment>
<evidence type="ECO:0000255" key="1">
    <source>
        <dbReference type="HAMAP-Rule" id="MF_00558"/>
    </source>
</evidence>
<dbReference type="EC" id="6.2.1.5" evidence="1"/>
<dbReference type="EMBL" id="CP000076">
    <property type="protein sequence ID" value="AAY91016.1"/>
    <property type="molecule type" value="Genomic_DNA"/>
</dbReference>
<dbReference type="RefSeq" id="WP_009047768.1">
    <property type="nucleotide sequence ID" value="NC_004129.6"/>
</dbReference>
<dbReference type="SMR" id="Q4KFY6"/>
<dbReference type="STRING" id="220664.PFL_1721"/>
<dbReference type="GeneID" id="61649393"/>
<dbReference type="KEGG" id="pfl:PFL_1721"/>
<dbReference type="eggNOG" id="COG0045">
    <property type="taxonomic scope" value="Bacteria"/>
</dbReference>
<dbReference type="HOGENOM" id="CLU_037430_0_2_6"/>
<dbReference type="UniPathway" id="UPA00223">
    <property type="reaction ID" value="UER00999"/>
</dbReference>
<dbReference type="Proteomes" id="UP000008540">
    <property type="component" value="Chromosome"/>
</dbReference>
<dbReference type="GO" id="GO:0005829">
    <property type="term" value="C:cytosol"/>
    <property type="evidence" value="ECO:0007669"/>
    <property type="project" value="TreeGrafter"/>
</dbReference>
<dbReference type="GO" id="GO:0042709">
    <property type="term" value="C:succinate-CoA ligase complex"/>
    <property type="evidence" value="ECO:0007669"/>
    <property type="project" value="TreeGrafter"/>
</dbReference>
<dbReference type="GO" id="GO:0005524">
    <property type="term" value="F:ATP binding"/>
    <property type="evidence" value="ECO:0007669"/>
    <property type="project" value="UniProtKB-UniRule"/>
</dbReference>
<dbReference type="GO" id="GO:0000287">
    <property type="term" value="F:magnesium ion binding"/>
    <property type="evidence" value="ECO:0007669"/>
    <property type="project" value="UniProtKB-UniRule"/>
</dbReference>
<dbReference type="GO" id="GO:0004775">
    <property type="term" value="F:succinate-CoA ligase (ADP-forming) activity"/>
    <property type="evidence" value="ECO:0007669"/>
    <property type="project" value="UniProtKB-UniRule"/>
</dbReference>
<dbReference type="GO" id="GO:0004776">
    <property type="term" value="F:succinate-CoA ligase (GDP-forming) activity"/>
    <property type="evidence" value="ECO:0007669"/>
    <property type="project" value="RHEA"/>
</dbReference>
<dbReference type="GO" id="GO:0006104">
    <property type="term" value="P:succinyl-CoA metabolic process"/>
    <property type="evidence" value="ECO:0007669"/>
    <property type="project" value="TreeGrafter"/>
</dbReference>
<dbReference type="GO" id="GO:0006099">
    <property type="term" value="P:tricarboxylic acid cycle"/>
    <property type="evidence" value="ECO:0007669"/>
    <property type="project" value="UniProtKB-UniRule"/>
</dbReference>
<dbReference type="FunFam" id="3.30.1490.20:FF:000002">
    <property type="entry name" value="Succinate--CoA ligase [ADP-forming] subunit beta"/>
    <property type="match status" value="1"/>
</dbReference>
<dbReference type="FunFam" id="3.30.470.20:FF:000002">
    <property type="entry name" value="Succinate--CoA ligase [ADP-forming] subunit beta"/>
    <property type="match status" value="1"/>
</dbReference>
<dbReference type="FunFam" id="3.40.50.261:FF:000001">
    <property type="entry name" value="Succinate--CoA ligase [ADP-forming] subunit beta"/>
    <property type="match status" value="1"/>
</dbReference>
<dbReference type="Gene3D" id="3.30.1490.20">
    <property type="entry name" value="ATP-grasp fold, A domain"/>
    <property type="match status" value="1"/>
</dbReference>
<dbReference type="Gene3D" id="3.30.470.20">
    <property type="entry name" value="ATP-grasp fold, B domain"/>
    <property type="match status" value="1"/>
</dbReference>
<dbReference type="Gene3D" id="3.40.50.261">
    <property type="entry name" value="Succinyl-CoA synthetase domains"/>
    <property type="match status" value="1"/>
</dbReference>
<dbReference type="HAMAP" id="MF_00558">
    <property type="entry name" value="Succ_CoA_beta"/>
    <property type="match status" value="1"/>
</dbReference>
<dbReference type="InterPro" id="IPR011761">
    <property type="entry name" value="ATP-grasp"/>
</dbReference>
<dbReference type="InterPro" id="IPR013650">
    <property type="entry name" value="ATP-grasp_succ-CoA_synth-type"/>
</dbReference>
<dbReference type="InterPro" id="IPR013815">
    <property type="entry name" value="ATP_grasp_subdomain_1"/>
</dbReference>
<dbReference type="InterPro" id="IPR017866">
    <property type="entry name" value="Succ-CoA_synthase_bsu_CS"/>
</dbReference>
<dbReference type="InterPro" id="IPR005811">
    <property type="entry name" value="SUCC_ACL_C"/>
</dbReference>
<dbReference type="InterPro" id="IPR005809">
    <property type="entry name" value="Succ_CoA_ligase-like_bsu"/>
</dbReference>
<dbReference type="InterPro" id="IPR016102">
    <property type="entry name" value="Succinyl-CoA_synth-like"/>
</dbReference>
<dbReference type="NCBIfam" id="NF001913">
    <property type="entry name" value="PRK00696.1"/>
    <property type="match status" value="1"/>
</dbReference>
<dbReference type="NCBIfam" id="TIGR01016">
    <property type="entry name" value="sucCoAbeta"/>
    <property type="match status" value="1"/>
</dbReference>
<dbReference type="PANTHER" id="PTHR11815:SF10">
    <property type="entry name" value="SUCCINATE--COA LIGASE [GDP-FORMING] SUBUNIT BETA, MITOCHONDRIAL"/>
    <property type="match status" value="1"/>
</dbReference>
<dbReference type="PANTHER" id="PTHR11815">
    <property type="entry name" value="SUCCINYL-COA SYNTHETASE BETA CHAIN"/>
    <property type="match status" value="1"/>
</dbReference>
<dbReference type="Pfam" id="PF08442">
    <property type="entry name" value="ATP-grasp_2"/>
    <property type="match status" value="1"/>
</dbReference>
<dbReference type="Pfam" id="PF00549">
    <property type="entry name" value="Ligase_CoA"/>
    <property type="match status" value="1"/>
</dbReference>
<dbReference type="PIRSF" id="PIRSF001554">
    <property type="entry name" value="SucCS_beta"/>
    <property type="match status" value="1"/>
</dbReference>
<dbReference type="SUPFAM" id="SSF56059">
    <property type="entry name" value="Glutathione synthetase ATP-binding domain-like"/>
    <property type="match status" value="1"/>
</dbReference>
<dbReference type="SUPFAM" id="SSF52210">
    <property type="entry name" value="Succinyl-CoA synthetase domains"/>
    <property type="match status" value="1"/>
</dbReference>
<dbReference type="PROSITE" id="PS50975">
    <property type="entry name" value="ATP_GRASP"/>
    <property type="match status" value="1"/>
</dbReference>
<dbReference type="PROSITE" id="PS01217">
    <property type="entry name" value="SUCCINYL_COA_LIG_3"/>
    <property type="match status" value="1"/>
</dbReference>
<sequence length="388" mass="41340">MNLHEYQGKQLFAEYGLPVSKGYAVDTPEEAAEACDKIGGSEWVVKAQVHAGGRGKAGGVKLVRSKEDAKAFAQQWLGKRLVTYQTDANGQPVTKILVESCTDIAKELYLGAVVDRSSRRIVFMASTEGGVDIEKIAHDTPEKILKATIDPLVGAQPFQGRELAFQLGLEGKQVAQFAKIFVGLAKLFQDHDLALLEVNPLVIKADGDLHCLDAKINIDANAMYRQPKLKTFHDPSQDDPREAHAAKFELNYVALEGNIGCMVNGAGLAMGTMDIVNLHGGKPANFLDVGGGATKERVTEAFKIILSDTNVAAVLVNIFGGIVRCDMIAEGIIGAVKEVGVKIPVVVRLEGNNAELGAKVLAESGLNIIAATSLTDAAQQVVKAAEGK</sequence>